<sequence>MNVAGYISLLVILSLLIGYLFGSIMFADVASMILKRNVRELGSKNPGTTNSFRVFPKKVAIAIGFFEIIKSVIPFSIILLIYKYGLQPELTKLDPSVINKTYYLTYLAPLAAIFGHMYPVYFKFNGGKAVATTAGFVFVVSPWWFLIIALTWWTITLISKYVSLASIVCFIIFLFLPYIPWLDYLWWFSLDKITFLTYQSDWYIIVFFAIANTILSTIIIWKHRGNIVRLINKQENKITKKV</sequence>
<dbReference type="EC" id="2.3.1.275" evidence="1"/>
<dbReference type="EMBL" id="AE015450">
    <property type="protein sequence ID" value="AAP56736.2"/>
    <property type="molecule type" value="Genomic_DNA"/>
</dbReference>
<dbReference type="RefSeq" id="WP_011113632.1">
    <property type="nucleotide sequence ID" value="NC_004829.2"/>
</dbReference>
<dbReference type="SMR" id="Q7NB93"/>
<dbReference type="GeneID" id="93510215"/>
<dbReference type="KEGG" id="mga:MGA_0008"/>
<dbReference type="HOGENOM" id="CLU_081254_3_0_14"/>
<dbReference type="OrthoDB" id="9777124at2"/>
<dbReference type="UniPathway" id="UPA00085"/>
<dbReference type="Proteomes" id="UP000001418">
    <property type="component" value="Chromosome"/>
</dbReference>
<dbReference type="GO" id="GO:0005886">
    <property type="term" value="C:plasma membrane"/>
    <property type="evidence" value="ECO:0007669"/>
    <property type="project" value="UniProtKB-SubCell"/>
</dbReference>
<dbReference type="GO" id="GO:0043772">
    <property type="term" value="F:acyl-phosphate glycerol-3-phosphate acyltransferase activity"/>
    <property type="evidence" value="ECO:0007669"/>
    <property type="project" value="UniProtKB-UniRule"/>
</dbReference>
<dbReference type="GO" id="GO:0008654">
    <property type="term" value="P:phospholipid biosynthetic process"/>
    <property type="evidence" value="ECO:0007669"/>
    <property type="project" value="UniProtKB-UniRule"/>
</dbReference>
<dbReference type="HAMAP" id="MF_01043">
    <property type="entry name" value="PlsY"/>
    <property type="match status" value="1"/>
</dbReference>
<dbReference type="InterPro" id="IPR003811">
    <property type="entry name" value="G3P_acylTferase_PlsY"/>
</dbReference>
<dbReference type="NCBIfam" id="TIGR00023">
    <property type="entry name" value="glycerol-3-phosphate 1-O-acyltransferase PlsY"/>
    <property type="match status" value="1"/>
</dbReference>
<dbReference type="PANTHER" id="PTHR30309:SF0">
    <property type="entry name" value="GLYCEROL-3-PHOSPHATE ACYLTRANSFERASE-RELATED"/>
    <property type="match status" value="1"/>
</dbReference>
<dbReference type="PANTHER" id="PTHR30309">
    <property type="entry name" value="INNER MEMBRANE PROTEIN YGIH"/>
    <property type="match status" value="1"/>
</dbReference>
<dbReference type="Pfam" id="PF02660">
    <property type="entry name" value="G3P_acyltransf"/>
    <property type="match status" value="1"/>
</dbReference>
<dbReference type="SMART" id="SM01207">
    <property type="entry name" value="G3P_acyltransf"/>
    <property type="match status" value="1"/>
</dbReference>
<comment type="function">
    <text evidence="1">Catalyzes the transfer of an acyl group from acyl-phosphate (acyl-PO(4)) to glycerol-3-phosphate (G3P) to form lysophosphatidic acid (LPA). This enzyme utilizes acyl-phosphate as fatty acyl donor, but not acyl-CoA or acyl-ACP.</text>
</comment>
<comment type="catalytic activity">
    <reaction evidence="1">
        <text>an acyl phosphate + sn-glycerol 3-phosphate = a 1-acyl-sn-glycero-3-phosphate + phosphate</text>
        <dbReference type="Rhea" id="RHEA:34075"/>
        <dbReference type="ChEBI" id="CHEBI:43474"/>
        <dbReference type="ChEBI" id="CHEBI:57597"/>
        <dbReference type="ChEBI" id="CHEBI:57970"/>
        <dbReference type="ChEBI" id="CHEBI:59918"/>
        <dbReference type="EC" id="2.3.1.275"/>
    </reaction>
</comment>
<comment type="pathway">
    <text evidence="1">Lipid metabolism; phospholipid metabolism.</text>
</comment>
<comment type="subunit">
    <text evidence="1">Probably interacts with PlsX.</text>
</comment>
<comment type="subcellular location">
    <subcellularLocation>
        <location evidence="1">Cell membrane</location>
        <topology evidence="1">Multi-pass membrane protein</topology>
    </subcellularLocation>
</comment>
<comment type="similarity">
    <text evidence="1">Belongs to the PlsY family.</text>
</comment>
<keyword id="KW-1003">Cell membrane</keyword>
<keyword id="KW-0444">Lipid biosynthesis</keyword>
<keyword id="KW-0443">Lipid metabolism</keyword>
<keyword id="KW-0472">Membrane</keyword>
<keyword id="KW-0594">Phospholipid biosynthesis</keyword>
<keyword id="KW-1208">Phospholipid metabolism</keyword>
<keyword id="KW-1185">Reference proteome</keyword>
<keyword id="KW-0808">Transferase</keyword>
<keyword id="KW-0812">Transmembrane</keyword>
<keyword id="KW-1133">Transmembrane helix</keyword>
<protein>
    <recommendedName>
        <fullName evidence="1">Glycerol-3-phosphate acyltransferase</fullName>
    </recommendedName>
    <alternativeName>
        <fullName evidence="1">Acyl-PO4 G3P acyltransferase</fullName>
    </alternativeName>
    <alternativeName>
        <fullName evidence="1">Acyl-phosphate--glycerol-3-phosphate acyltransferase</fullName>
    </alternativeName>
    <alternativeName>
        <fullName evidence="1">G3P acyltransferase</fullName>
        <shortName evidence="1">GPAT</shortName>
        <ecNumber evidence="1">2.3.1.275</ecNumber>
    </alternativeName>
    <alternativeName>
        <fullName evidence="1">Lysophosphatidic acid synthase</fullName>
        <shortName evidence="1">LPA synthase</shortName>
    </alternativeName>
</protein>
<organism>
    <name type="scientific">Mycoplasmoides gallisepticum (strain R(low / passage 15 / clone 2))</name>
    <name type="common">Mycoplasma gallisepticum</name>
    <dbReference type="NCBI Taxonomy" id="710127"/>
    <lineage>
        <taxon>Bacteria</taxon>
        <taxon>Bacillati</taxon>
        <taxon>Mycoplasmatota</taxon>
        <taxon>Mycoplasmoidales</taxon>
        <taxon>Mycoplasmoidaceae</taxon>
        <taxon>Mycoplasmoides</taxon>
    </lineage>
</organism>
<gene>
    <name evidence="1" type="primary">plsY</name>
    <name type="ordered locus">MYCGA3860</name>
    <name type="ORF">MGA_0008</name>
</gene>
<name>PLSY_MYCGA</name>
<reference key="1">
    <citation type="journal article" date="2003" name="Microbiology">
        <title>The complete genome sequence of the avian pathogen Mycoplasma gallisepticum strain R(low).</title>
        <authorList>
            <person name="Papazisi L."/>
            <person name="Gorton T.S."/>
            <person name="Kutish G."/>
            <person name="Markham P.F."/>
            <person name="Browning G.F."/>
            <person name="Nguyen D.K."/>
            <person name="Swartzell S."/>
            <person name="Madan A."/>
            <person name="Mahairas G."/>
            <person name="Geary S.J."/>
        </authorList>
    </citation>
    <scope>NUCLEOTIDE SEQUENCE [LARGE SCALE GENOMIC DNA]</scope>
    <source>
        <strain>R(low / passage 15 / clone 2)</strain>
    </source>
</reference>
<evidence type="ECO:0000255" key="1">
    <source>
        <dbReference type="HAMAP-Rule" id="MF_01043"/>
    </source>
</evidence>
<feature type="chain" id="PRO_0000188401" description="Glycerol-3-phosphate acyltransferase">
    <location>
        <begin position="1"/>
        <end position="242"/>
    </location>
</feature>
<feature type="transmembrane region" description="Helical" evidence="1">
    <location>
        <begin position="7"/>
        <end position="27"/>
    </location>
</feature>
<feature type="transmembrane region" description="Helical" evidence="1">
    <location>
        <begin position="61"/>
        <end position="81"/>
    </location>
</feature>
<feature type="transmembrane region" description="Helical" evidence="1">
    <location>
        <begin position="102"/>
        <end position="122"/>
    </location>
</feature>
<feature type="transmembrane region" description="Helical" evidence="1">
    <location>
        <begin position="135"/>
        <end position="155"/>
    </location>
</feature>
<feature type="transmembrane region" description="Helical" evidence="1">
    <location>
        <begin position="162"/>
        <end position="182"/>
    </location>
</feature>
<feature type="transmembrane region" description="Helical" evidence="1">
    <location>
        <begin position="201"/>
        <end position="221"/>
    </location>
</feature>
<accession>Q7NB93</accession>
<proteinExistence type="inferred from homology"/>